<reference key="1">
    <citation type="journal article" date="2010" name="J. Bacteriol.">
        <title>Complete genome sequence of Beijerinckia indica subsp. indica.</title>
        <authorList>
            <person name="Tamas I."/>
            <person name="Dedysh S.N."/>
            <person name="Liesack W."/>
            <person name="Stott M.B."/>
            <person name="Alam M."/>
            <person name="Murrell J.C."/>
            <person name="Dunfield P.F."/>
        </authorList>
    </citation>
    <scope>NUCLEOTIDE SEQUENCE [LARGE SCALE GENOMIC DNA]</scope>
    <source>
        <strain>ATCC 9039 / DSM 1715 / NCIMB 8712</strain>
    </source>
</reference>
<feature type="chain" id="PRO_1000123121" description="Glycerol-3-phosphate dehydrogenase [NAD(P)+]">
    <location>
        <begin position="1"/>
        <end position="335"/>
    </location>
</feature>
<feature type="active site" description="Proton acceptor" evidence="1">
    <location>
        <position position="192"/>
    </location>
</feature>
<feature type="binding site" evidence="1">
    <location>
        <position position="15"/>
    </location>
    <ligand>
        <name>NADPH</name>
        <dbReference type="ChEBI" id="CHEBI:57783"/>
    </ligand>
</feature>
<feature type="binding site" evidence="1">
    <location>
        <position position="36"/>
    </location>
    <ligand>
        <name>NADPH</name>
        <dbReference type="ChEBI" id="CHEBI:57783"/>
    </ligand>
</feature>
<feature type="binding site" evidence="1">
    <location>
        <position position="109"/>
    </location>
    <ligand>
        <name>NADPH</name>
        <dbReference type="ChEBI" id="CHEBI:57783"/>
    </ligand>
</feature>
<feature type="binding site" evidence="1">
    <location>
        <position position="109"/>
    </location>
    <ligand>
        <name>sn-glycerol 3-phosphate</name>
        <dbReference type="ChEBI" id="CHEBI:57597"/>
    </ligand>
</feature>
<feature type="binding site" evidence="1">
    <location>
        <position position="137"/>
    </location>
    <ligand>
        <name>sn-glycerol 3-phosphate</name>
        <dbReference type="ChEBI" id="CHEBI:57597"/>
    </ligand>
</feature>
<feature type="binding site" evidence="1">
    <location>
        <position position="139"/>
    </location>
    <ligand>
        <name>sn-glycerol 3-phosphate</name>
        <dbReference type="ChEBI" id="CHEBI:57597"/>
    </ligand>
</feature>
<feature type="binding site" evidence="1">
    <location>
        <position position="141"/>
    </location>
    <ligand>
        <name>NADPH</name>
        <dbReference type="ChEBI" id="CHEBI:57783"/>
    </ligand>
</feature>
<feature type="binding site" evidence="1">
    <location>
        <position position="192"/>
    </location>
    <ligand>
        <name>sn-glycerol 3-phosphate</name>
        <dbReference type="ChEBI" id="CHEBI:57597"/>
    </ligand>
</feature>
<feature type="binding site" evidence="1">
    <location>
        <position position="245"/>
    </location>
    <ligand>
        <name>sn-glycerol 3-phosphate</name>
        <dbReference type="ChEBI" id="CHEBI:57597"/>
    </ligand>
</feature>
<feature type="binding site" evidence="1">
    <location>
        <position position="255"/>
    </location>
    <ligand>
        <name>sn-glycerol 3-phosphate</name>
        <dbReference type="ChEBI" id="CHEBI:57597"/>
    </ligand>
</feature>
<feature type="binding site" evidence="1">
    <location>
        <position position="256"/>
    </location>
    <ligand>
        <name>NADPH</name>
        <dbReference type="ChEBI" id="CHEBI:57783"/>
    </ligand>
</feature>
<feature type="binding site" evidence="1">
    <location>
        <position position="256"/>
    </location>
    <ligand>
        <name>sn-glycerol 3-phosphate</name>
        <dbReference type="ChEBI" id="CHEBI:57597"/>
    </ligand>
</feature>
<feature type="binding site" evidence="1">
    <location>
        <position position="257"/>
    </location>
    <ligand>
        <name>sn-glycerol 3-phosphate</name>
        <dbReference type="ChEBI" id="CHEBI:57597"/>
    </ligand>
</feature>
<feature type="binding site" evidence="1">
    <location>
        <position position="279"/>
    </location>
    <ligand>
        <name>NADPH</name>
        <dbReference type="ChEBI" id="CHEBI:57783"/>
    </ligand>
</feature>
<feature type="binding site" evidence="1">
    <location>
        <position position="281"/>
    </location>
    <ligand>
        <name>NADPH</name>
        <dbReference type="ChEBI" id="CHEBI:57783"/>
    </ligand>
</feature>
<sequence length="335" mass="34335">MARWRRIVALGGGAWGTALANLAARAGAEDVALWTRDAAHVAEMTATGVNARRLPGIPLHSALRPTTDLGVVAEADLILAVVPSQSLRGVLEQIQSTLPTPTPLILCCKGIEHETGLFMSEVAADVLGDQPVAVLSGPSFAEDVARGKPTAVTLAAYDGALAAALVEALAAPWFRLYHTHDVRGVEIGGAAKNVLAIANGIAAGRDLGASAGAALIARGFAELCRFGRAFGVEMGTLAGLSGLGDLVLTCGSAQSRNYSFGHALGRGTSINDARANIGLVEGFFTCGILNDLARAKGVDMPIAQAVEAVLAERMGVDEAIATLLARPSKAELAGF</sequence>
<name>GPDA_BEII9</name>
<evidence type="ECO:0000255" key="1">
    <source>
        <dbReference type="HAMAP-Rule" id="MF_00394"/>
    </source>
</evidence>
<dbReference type="EC" id="1.1.1.94" evidence="1"/>
<dbReference type="EMBL" id="CP001016">
    <property type="protein sequence ID" value="ACB96779.1"/>
    <property type="molecule type" value="Genomic_DNA"/>
</dbReference>
<dbReference type="RefSeq" id="WP_012386127.1">
    <property type="nucleotide sequence ID" value="NC_010581.1"/>
</dbReference>
<dbReference type="SMR" id="B2ID14"/>
<dbReference type="STRING" id="395963.Bind_3219"/>
<dbReference type="KEGG" id="bid:Bind_3219"/>
<dbReference type="eggNOG" id="COG0240">
    <property type="taxonomic scope" value="Bacteria"/>
</dbReference>
<dbReference type="HOGENOM" id="CLU_033449_0_2_5"/>
<dbReference type="OrthoDB" id="9812273at2"/>
<dbReference type="UniPathway" id="UPA00940"/>
<dbReference type="Proteomes" id="UP000001695">
    <property type="component" value="Chromosome"/>
</dbReference>
<dbReference type="GO" id="GO:0005829">
    <property type="term" value="C:cytosol"/>
    <property type="evidence" value="ECO:0007669"/>
    <property type="project" value="TreeGrafter"/>
</dbReference>
<dbReference type="GO" id="GO:0047952">
    <property type="term" value="F:glycerol-3-phosphate dehydrogenase [NAD(P)+] activity"/>
    <property type="evidence" value="ECO:0007669"/>
    <property type="project" value="UniProtKB-UniRule"/>
</dbReference>
<dbReference type="GO" id="GO:0051287">
    <property type="term" value="F:NAD binding"/>
    <property type="evidence" value="ECO:0007669"/>
    <property type="project" value="InterPro"/>
</dbReference>
<dbReference type="GO" id="GO:0005975">
    <property type="term" value="P:carbohydrate metabolic process"/>
    <property type="evidence" value="ECO:0007669"/>
    <property type="project" value="InterPro"/>
</dbReference>
<dbReference type="GO" id="GO:0046167">
    <property type="term" value="P:glycerol-3-phosphate biosynthetic process"/>
    <property type="evidence" value="ECO:0007669"/>
    <property type="project" value="UniProtKB-UniRule"/>
</dbReference>
<dbReference type="GO" id="GO:0046168">
    <property type="term" value="P:glycerol-3-phosphate catabolic process"/>
    <property type="evidence" value="ECO:0007669"/>
    <property type="project" value="InterPro"/>
</dbReference>
<dbReference type="GO" id="GO:0006650">
    <property type="term" value="P:glycerophospholipid metabolic process"/>
    <property type="evidence" value="ECO:0007669"/>
    <property type="project" value="UniProtKB-UniRule"/>
</dbReference>
<dbReference type="GO" id="GO:0008654">
    <property type="term" value="P:phospholipid biosynthetic process"/>
    <property type="evidence" value="ECO:0007669"/>
    <property type="project" value="UniProtKB-KW"/>
</dbReference>
<dbReference type="FunFam" id="3.40.50.720:FF:000019">
    <property type="entry name" value="Glycerol-3-phosphate dehydrogenase [NAD(P)+]"/>
    <property type="match status" value="1"/>
</dbReference>
<dbReference type="Gene3D" id="1.10.1040.10">
    <property type="entry name" value="N-(1-d-carboxylethyl)-l-norvaline Dehydrogenase, domain 2"/>
    <property type="match status" value="1"/>
</dbReference>
<dbReference type="Gene3D" id="3.40.50.720">
    <property type="entry name" value="NAD(P)-binding Rossmann-like Domain"/>
    <property type="match status" value="1"/>
</dbReference>
<dbReference type="HAMAP" id="MF_00394">
    <property type="entry name" value="NAD_Glyc3P_dehydrog"/>
    <property type="match status" value="1"/>
</dbReference>
<dbReference type="InterPro" id="IPR008927">
    <property type="entry name" value="6-PGluconate_DH-like_C_sf"/>
</dbReference>
<dbReference type="InterPro" id="IPR013328">
    <property type="entry name" value="6PGD_dom2"/>
</dbReference>
<dbReference type="InterPro" id="IPR006168">
    <property type="entry name" value="G3P_DH_NAD-dep"/>
</dbReference>
<dbReference type="InterPro" id="IPR006109">
    <property type="entry name" value="G3P_DH_NAD-dep_C"/>
</dbReference>
<dbReference type="InterPro" id="IPR011128">
    <property type="entry name" value="G3P_DH_NAD-dep_N"/>
</dbReference>
<dbReference type="InterPro" id="IPR036291">
    <property type="entry name" value="NAD(P)-bd_dom_sf"/>
</dbReference>
<dbReference type="NCBIfam" id="NF000940">
    <property type="entry name" value="PRK00094.1-2"/>
    <property type="match status" value="1"/>
</dbReference>
<dbReference type="NCBIfam" id="NF000942">
    <property type="entry name" value="PRK00094.1-4"/>
    <property type="match status" value="1"/>
</dbReference>
<dbReference type="PANTHER" id="PTHR11728">
    <property type="entry name" value="GLYCEROL-3-PHOSPHATE DEHYDROGENASE"/>
    <property type="match status" value="1"/>
</dbReference>
<dbReference type="PANTHER" id="PTHR11728:SF1">
    <property type="entry name" value="GLYCEROL-3-PHOSPHATE DEHYDROGENASE [NAD(+)] 2, CHLOROPLASTIC"/>
    <property type="match status" value="1"/>
</dbReference>
<dbReference type="Pfam" id="PF07479">
    <property type="entry name" value="NAD_Gly3P_dh_C"/>
    <property type="match status" value="1"/>
</dbReference>
<dbReference type="Pfam" id="PF01210">
    <property type="entry name" value="NAD_Gly3P_dh_N"/>
    <property type="match status" value="1"/>
</dbReference>
<dbReference type="PIRSF" id="PIRSF000114">
    <property type="entry name" value="Glycerol-3-P_dh"/>
    <property type="match status" value="1"/>
</dbReference>
<dbReference type="PRINTS" id="PR00077">
    <property type="entry name" value="GPDHDRGNASE"/>
</dbReference>
<dbReference type="SUPFAM" id="SSF48179">
    <property type="entry name" value="6-phosphogluconate dehydrogenase C-terminal domain-like"/>
    <property type="match status" value="1"/>
</dbReference>
<dbReference type="SUPFAM" id="SSF51735">
    <property type="entry name" value="NAD(P)-binding Rossmann-fold domains"/>
    <property type="match status" value="1"/>
</dbReference>
<dbReference type="PROSITE" id="PS00957">
    <property type="entry name" value="NAD_G3PDH"/>
    <property type="match status" value="1"/>
</dbReference>
<gene>
    <name evidence="1" type="primary">gpsA</name>
    <name type="ordered locus">Bind_3219</name>
</gene>
<accession>B2ID14</accession>
<proteinExistence type="inferred from homology"/>
<keyword id="KW-0963">Cytoplasm</keyword>
<keyword id="KW-0444">Lipid biosynthesis</keyword>
<keyword id="KW-0443">Lipid metabolism</keyword>
<keyword id="KW-0520">NAD</keyword>
<keyword id="KW-0521">NADP</keyword>
<keyword id="KW-0547">Nucleotide-binding</keyword>
<keyword id="KW-0560">Oxidoreductase</keyword>
<keyword id="KW-0594">Phospholipid biosynthesis</keyword>
<keyword id="KW-1208">Phospholipid metabolism</keyword>
<keyword id="KW-1185">Reference proteome</keyword>
<organism>
    <name type="scientific">Beijerinckia indica subsp. indica (strain ATCC 9039 / DSM 1715 / NCIMB 8712)</name>
    <dbReference type="NCBI Taxonomy" id="395963"/>
    <lineage>
        <taxon>Bacteria</taxon>
        <taxon>Pseudomonadati</taxon>
        <taxon>Pseudomonadota</taxon>
        <taxon>Alphaproteobacteria</taxon>
        <taxon>Hyphomicrobiales</taxon>
        <taxon>Beijerinckiaceae</taxon>
        <taxon>Beijerinckia</taxon>
    </lineage>
</organism>
<comment type="function">
    <text evidence="1">Catalyzes the reduction of the glycolytic intermediate dihydroxyacetone phosphate (DHAP) to sn-glycerol 3-phosphate (G3P), the key precursor for phospholipid synthesis.</text>
</comment>
<comment type="catalytic activity">
    <reaction evidence="1">
        <text>sn-glycerol 3-phosphate + NAD(+) = dihydroxyacetone phosphate + NADH + H(+)</text>
        <dbReference type="Rhea" id="RHEA:11092"/>
        <dbReference type="ChEBI" id="CHEBI:15378"/>
        <dbReference type="ChEBI" id="CHEBI:57540"/>
        <dbReference type="ChEBI" id="CHEBI:57597"/>
        <dbReference type="ChEBI" id="CHEBI:57642"/>
        <dbReference type="ChEBI" id="CHEBI:57945"/>
        <dbReference type="EC" id="1.1.1.94"/>
    </reaction>
    <physiologicalReaction direction="right-to-left" evidence="1">
        <dbReference type="Rhea" id="RHEA:11094"/>
    </physiologicalReaction>
</comment>
<comment type="catalytic activity">
    <reaction evidence="1">
        <text>sn-glycerol 3-phosphate + NADP(+) = dihydroxyacetone phosphate + NADPH + H(+)</text>
        <dbReference type="Rhea" id="RHEA:11096"/>
        <dbReference type="ChEBI" id="CHEBI:15378"/>
        <dbReference type="ChEBI" id="CHEBI:57597"/>
        <dbReference type="ChEBI" id="CHEBI:57642"/>
        <dbReference type="ChEBI" id="CHEBI:57783"/>
        <dbReference type="ChEBI" id="CHEBI:58349"/>
        <dbReference type="EC" id="1.1.1.94"/>
    </reaction>
    <physiologicalReaction direction="right-to-left" evidence="1">
        <dbReference type="Rhea" id="RHEA:11098"/>
    </physiologicalReaction>
</comment>
<comment type="pathway">
    <text evidence="1">Membrane lipid metabolism; glycerophospholipid metabolism.</text>
</comment>
<comment type="subcellular location">
    <subcellularLocation>
        <location evidence="1">Cytoplasm</location>
    </subcellularLocation>
</comment>
<comment type="similarity">
    <text evidence="1">Belongs to the NAD-dependent glycerol-3-phosphate dehydrogenase family.</text>
</comment>
<protein>
    <recommendedName>
        <fullName evidence="1">Glycerol-3-phosphate dehydrogenase [NAD(P)+]</fullName>
        <ecNumber evidence="1">1.1.1.94</ecNumber>
    </recommendedName>
    <alternativeName>
        <fullName evidence="1">NAD(P)(+)-dependent glycerol-3-phosphate dehydrogenase</fullName>
    </alternativeName>
    <alternativeName>
        <fullName evidence="1">NAD(P)H-dependent dihydroxyacetone-phosphate reductase</fullName>
    </alternativeName>
</protein>